<protein>
    <recommendedName>
        <fullName evidence="1">Cysteine--tRNA ligase</fullName>
        <ecNumber evidence="1">6.1.1.16</ecNumber>
    </recommendedName>
    <alternativeName>
        <fullName evidence="1">Cysteinyl-tRNA synthetase</fullName>
        <shortName evidence="1">CysRS</shortName>
    </alternativeName>
</protein>
<name>SYC_RICFE</name>
<evidence type="ECO:0000255" key="1">
    <source>
        <dbReference type="HAMAP-Rule" id="MF_00041"/>
    </source>
</evidence>
<proteinExistence type="inferred from homology"/>
<dbReference type="EC" id="6.1.1.16" evidence="1"/>
<dbReference type="EMBL" id="CP000053">
    <property type="protein sequence ID" value="AAY60919.1"/>
    <property type="molecule type" value="Genomic_DNA"/>
</dbReference>
<dbReference type="SMR" id="Q4UND9"/>
<dbReference type="STRING" id="315456.RF_0068"/>
<dbReference type="KEGG" id="rfe:RF_0068"/>
<dbReference type="eggNOG" id="COG0215">
    <property type="taxonomic scope" value="Bacteria"/>
</dbReference>
<dbReference type="HOGENOM" id="CLU_013528_0_1_5"/>
<dbReference type="OrthoDB" id="9815130at2"/>
<dbReference type="Proteomes" id="UP000008548">
    <property type="component" value="Chromosome"/>
</dbReference>
<dbReference type="GO" id="GO:0005829">
    <property type="term" value="C:cytosol"/>
    <property type="evidence" value="ECO:0007669"/>
    <property type="project" value="TreeGrafter"/>
</dbReference>
<dbReference type="GO" id="GO:0005524">
    <property type="term" value="F:ATP binding"/>
    <property type="evidence" value="ECO:0007669"/>
    <property type="project" value="UniProtKB-UniRule"/>
</dbReference>
<dbReference type="GO" id="GO:0004817">
    <property type="term" value="F:cysteine-tRNA ligase activity"/>
    <property type="evidence" value="ECO:0007669"/>
    <property type="project" value="UniProtKB-UniRule"/>
</dbReference>
<dbReference type="GO" id="GO:0008270">
    <property type="term" value="F:zinc ion binding"/>
    <property type="evidence" value="ECO:0007669"/>
    <property type="project" value="UniProtKB-UniRule"/>
</dbReference>
<dbReference type="GO" id="GO:0006423">
    <property type="term" value="P:cysteinyl-tRNA aminoacylation"/>
    <property type="evidence" value="ECO:0007669"/>
    <property type="project" value="UniProtKB-UniRule"/>
</dbReference>
<dbReference type="CDD" id="cd00672">
    <property type="entry name" value="CysRS_core"/>
    <property type="match status" value="1"/>
</dbReference>
<dbReference type="FunFam" id="3.40.50.620:FF:000068">
    <property type="entry name" value="Cysteine--tRNA ligase"/>
    <property type="match status" value="1"/>
</dbReference>
<dbReference type="Gene3D" id="1.20.120.1910">
    <property type="entry name" value="Cysteine-tRNA ligase, C-terminal anti-codon recognition domain"/>
    <property type="match status" value="1"/>
</dbReference>
<dbReference type="Gene3D" id="3.40.50.620">
    <property type="entry name" value="HUPs"/>
    <property type="match status" value="1"/>
</dbReference>
<dbReference type="HAMAP" id="MF_00041">
    <property type="entry name" value="Cys_tRNA_synth"/>
    <property type="match status" value="1"/>
</dbReference>
<dbReference type="InterPro" id="IPR015803">
    <property type="entry name" value="Cys-tRNA-ligase"/>
</dbReference>
<dbReference type="InterPro" id="IPR015273">
    <property type="entry name" value="Cys-tRNA-synt_Ia_DALR"/>
</dbReference>
<dbReference type="InterPro" id="IPR024909">
    <property type="entry name" value="Cys-tRNA/MSH_ligase"/>
</dbReference>
<dbReference type="InterPro" id="IPR014729">
    <property type="entry name" value="Rossmann-like_a/b/a_fold"/>
</dbReference>
<dbReference type="InterPro" id="IPR032678">
    <property type="entry name" value="tRNA-synt_1_cat_dom"/>
</dbReference>
<dbReference type="InterPro" id="IPR009080">
    <property type="entry name" value="tRNAsynth_Ia_anticodon-bd"/>
</dbReference>
<dbReference type="NCBIfam" id="TIGR00435">
    <property type="entry name" value="cysS"/>
    <property type="match status" value="1"/>
</dbReference>
<dbReference type="PANTHER" id="PTHR10890:SF3">
    <property type="entry name" value="CYSTEINE--TRNA LIGASE, CYTOPLASMIC"/>
    <property type="match status" value="1"/>
</dbReference>
<dbReference type="PANTHER" id="PTHR10890">
    <property type="entry name" value="CYSTEINYL-TRNA SYNTHETASE"/>
    <property type="match status" value="1"/>
</dbReference>
<dbReference type="Pfam" id="PF01406">
    <property type="entry name" value="tRNA-synt_1e"/>
    <property type="match status" value="1"/>
</dbReference>
<dbReference type="PRINTS" id="PR00983">
    <property type="entry name" value="TRNASYNTHCYS"/>
</dbReference>
<dbReference type="SMART" id="SM00840">
    <property type="entry name" value="DALR_2"/>
    <property type="match status" value="1"/>
</dbReference>
<dbReference type="SUPFAM" id="SSF47323">
    <property type="entry name" value="Anticodon-binding domain of a subclass of class I aminoacyl-tRNA synthetases"/>
    <property type="match status" value="1"/>
</dbReference>
<dbReference type="SUPFAM" id="SSF52374">
    <property type="entry name" value="Nucleotidylyl transferase"/>
    <property type="match status" value="1"/>
</dbReference>
<comment type="catalytic activity">
    <reaction evidence="1">
        <text>tRNA(Cys) + L-cysteine + ATP = L-cysteinyl-tRNA(Cys) + AMP + diphosphate</text>
        <dbReference type="Rhea" id="RHEA:17773"/>
        <dbReference type="Rhea" id="RHEA-COMP:9661"/>
        <dbReference type="Rhea" id="RHEA-COMP:9679"/>
        <dbReference type="ChEBI" id="CHEBI:30616"/>
        <dbReference type="ChEBI" id="CHEBI:33019"/>
        <dbReference type="ChEBI" id="CHEBI:35235"/>
        <dbReference type="ChEBI" id="CHEBI:78442"/>
        <dbReference type="ChEBI" id="CHEBI:78517"/>
        <dbReference type="ChEBI" id="CHEBI:456215"/>
        <dbReference type="EC" id="6.1.1.16"/>
    </reaction>
</comment>
<comment type="cofactor">
    <cofactor evidence="1">
        <name>Zn(2+)</name>
        <dbReference type="ChEBI" id="CHEBI:29105"/>
    </cofactor>
    <text evidence="1">Binds 1 zinc ion per subunit.</text>
</comment>
<comment type="subunit">
    <text evidence="1">Monomer.</text>
</comment>
<comment type="subcellular location">
    <subcellularLocation>
        <location evidence="1">Cytoplasm</location>
    </subcellularLocation>
</comment>
<comment type="similarity">
    <text evidence="1">Belongs to the class-I aminoacyl-tRNA synthetase family.</text>
</comment>
<sequence>MQIQFHLYNTLSRTKEVFNPQDQTKVKMYVCGPTVYDNPHIGNSRSVVVYDLLYRIVIKIFGEQSVKYVRNITDVDDKIIDRAELLSITINELTDKVTQEFHTNMAYLGCLLPSIEPKATEHIDVMIEIIERLIAKDHAYIADNHVYFDVLSAPNYTELSNRNLEEMFEGVRIENSKTKKHPQDFVLWKPAKPNESANMNFKSPWGFGRPGWHIECSAMSYKYLGENFDIHGGGADLIFPHHTNEIAQSRCAFPDSTYAKYWVHNGFLTVNGEKMSKSLGNFITVRNLMDKEISGEVVRLFLLSSHYRRPLDYNDKAIEDAKKTLDYWYRAIENINVQKIDLPHNFMQSLLDDMNTPLAVKIINDYAKGVFISKTEEEKQLNASAIITCANFIGLMNKTPHEWFNSGVDELYINELLNKRLEAKKQKNWLLADQIRNQLLEEKIILEDKPDGTTIWRKE</sequence>
<keyword id="KW-0030">Aminoacyl-tRNA synthetase</keyword>
<keyword id="KW-0067">ATP-binding</keyword>
<keyword id="KW-0963">Cytoplasm</keyword>
<keyword id="KW-0436">Ligase</keyword>
<keyword id="KW-0479">Metal-binding</keyword>
<keyword id="KW-0547">Nucleotide-binding</keyword>
<keyword id="KW-0648">Protein biosynthesis</keyword>
<keyword id="KW-0862">Zinc</keyword>
<gene>
    <name evidence="1" type="primary">cysS</name>
    <name type="ordered locus">RF_0068</name>
</gene>
<organism>
    <name type="scientific">Rickettsia felis (strain ATCC VR-1525 / URRWXCal2)</name>
    <name type="common">Rickettsia azadi</name>
    <dbReference type="NCBI Taxonomy" id="315456"/>
    <lineage>
        <taxon>Bacteria</taxon>
        <taxon>Pseudomonadati</taxon>
        <taxon>Pseudomonadota</taxon>
        <taxon>Alphaproteobacteria</taxon>
        <taxon>Rickettsiales</taxon>
        <taxon>Rickettsiaceae</taxon>
        <taxon>Rickettsieae</taxon>
        <taxon>Rickettsia</taxon>
        <taxon>spotted fever group</taxon>
    </lineage>
</organism>
<reference key="1">
    <citation type="journal article" date="2005" name="PLoS Biol.">
        <title>The genome sequence of Rickettsia felis identifies the first putative conjugative plasmid in an obligate intracellular parasite.</title>
        <authorList>
            <person name="Ogata H."/>
            <person name="Renesto P."/>
            <person name="Audic S."/>
            <person name="Robert C."/>
            <person name="Blanc G."/>
            <person name="Fournier P.-E."/>
            <person name="Parinello H."/>
            <person name="Claverie J.-M."/>
            <person name="Raoult D."/>
        </authorList>
    </citation>
    <scope>NUCLEOTIDE SEQUENCE [LARGE SCALE GENOMIC DNA]</scope>
    <source>
        <strain>ATCC VR-1525 / URRWXCal2</strain>
    </source>
</reference>
<accession>Q4UND9</accession>
<feature type="chain" id="PRO_0000240950" description="Cysteine--tRNA ligase">
    <location>
        <begin position="1"/>
        <end position="459"/>
    </location>
</feature>
<feature type="short sequence motif" description="'HIGH' region">
    <location>
        <begin position="33"/>
        <end position="43"/>
    </location>
</feature>
<feature type="short sequence motif" description="'KMSKS' region">
    <location>
        <begin position="274"/>
        <end position="278"/>
    </location>
</feature>
<feature type="binding site" evidence="1">
    <location>
        <position position="31"/>
    </location>
    <ligand>
        <name>Zn(2+)</name>
        <dbReference type="ChEBI" id="CHEBI:29105"/>
    </ligand>
</feature>
<feature type="binding site" evidence="1">
    <location>
        <position position="216"/>
    </location>
    <ligand>
        <name>Zn(2+)</name>
        <dbReference type="ChEBI" id="CHEBI:29105"/>
    </ligand>
</feature>
<feature type="binding site" evidence="1">
    <location>
        <position position="241"/>
    </location>
    <ligand>
        <name>Zn(2+)</name>
        <dbReference type="ChEBI" id="CHEBI:29105"/>
    </ligand>
</feature>
<feature type="binding site" evidence="1">
    <location>
        <position position="245"/>
    </location>
    <ligand>
        <name>Zn(2+)</name>
        <dbReference type="ChEBI" id="CHEBI:29105"/>
    </ligand>
</feature>
<feature type="binding site" evidence="1">
    <location>
        <position position="277"/>
    </location>
    <ligand>
        <name>ATP</name>
        <dbReference type="ChEBI" id="CHEBI:30616"/>
    </ligand>
</feature>